<accession>P13948</accession>
<keyword id="KW-0997">Cell inner membrane</keyword>
<keyword id="KW-1003">Cell membrane</keyword>
<keyword id="KW-0184">Conjugation</keyword>
<keyword id="KW-0472">Membrane</keyword>
<keyword id="KW-0614">Plasmid</keyword>
<keyword id="KW-0964">Secreted</keyword>
<organism>
    <name type="scientific">Escherichia coli</name>
    <dbReference type="NCBI Taxonomy" id="562"/>
    <lineage>
        <taxon>Bacteria</taxon>
        <taxon>Pseudomonadati</taxon>
        <taxon>Pseudomonadota</taxon>
        <taxon>Gammaproteobacteria</taxon>
        <taxon>Enterobacterales</taxon>
        <taxon>Enterobacteriaceae</taxon>
        <taxon>Escherichia</taxon>
    </lineage>
</organism>
<reference key="1">
    <citation type="journal article" date="1986" name="J. Bacteriol.">
        <title>Origin of transfer of IncF plasmids and nucleotide sequences of the type II oriT, traM, and traY alleles from ColB4-K98 and the type IV traY allele from R100-1.</title>
        <authorList>
            <person name="Finlay B.B."/>
            <person name="Frost L.S."/>
            <person name="Paranchych W."/>
        </authorList>
    </citation>
    <scope>NUCLEOTIDE SEQUENCE [GENOMIC DNA]</scope>
</reference>
<gene>
    <name type="primary">traA</name>
</gene>
<comment type="function">
    <text evidence="1">Propilin is the precursor of the pilus subunit, pilin, that forms conjugative pili, the filamentous surface appendages required for cell-to-cell contact during the earlier stages of bacterial conjugation, and that retract after contact is established. Mature pilin is assembled with the help of TraQ and TraX (By similarity).</text>
</comment>
<comment type="subunit">
    <text evidence="1">Monomer. Interacts with itself to form filaments; also interacts with TraQ (By similarity).</text>
</comment>
<comment type="subcellular location">
    <subcellularLocation>
        <location>Cell inner membrane</location>
        <topology>Multi-pass membrane protein</topology>
    </subcellularLocation>
    <subcellularLocation>
        <location evidence="1">Secreted</location>
    </subcellularLocation>
    <text evidence="1">Propilin is directed to the inner membrane, where it is cleaved and acetylated. Mature pilin forms filaments that are secreted to form the conjugative pilus (By similarity).</text>
</comment>
<comment type="similarity">
    <text evidence="3">Belongs to the TraA family.</text>
</comment>
<dbReference type="EMBL" id="AH003616">
    <property type="protein sequence ID" value="AAB04666.1"/>
    <property type="molecule type" value="Genomic_DNA"/>
</dbReference>
<dbReference type="RefSeq" id="WP_277382903.1">
    <property type="nucleotide sequence ID" value="NZ_BGND01000169.1"/>
</dbReference>
<dbReference type="GO" id="GO:0005576">
    <property type="term" value="C:extracellular region"/>
    <property type="evidence" value="ECO:0007669"/>
    <property type="project" value="UniProtKB-SubCell"/>
</dbReference>
<dbReference type="GO" id="GO:0005886">
    <property type="term" value="C:plasma membrane"/>
    <property type="evidence" value="ECO:0007669"/>
    <property type="project" value="UniProtKB-SubCell"/>
</dbReference>
<dbReference type="InterPro" id="IPR008873">
    <property type="entry name" value="TraA"/>
</dbReference>
<dbReference type="Pfam" id="PF05513">
    <property type="entry name" value="TraA"/>
    <property type="match status" value="1"/>
</dbReference>
<protein>
    <recommendedName>
        <fullName>Pilin</fullName>
    </recommendedName>
</protein>
<evidence type="ECO:0000250" key="1"/>
<evidence type="ECO:0000256" key="2">
    <source>
        <dbReference type="SAM" id="MobiDB-lite"/>
    </source>
</evidence>
<evidence type="ECO:0000305" key="3"/>
<name>PIL3_ECOLX</name>
<sequence>MDAVLSVQGASAPVKKKSFFS</sequence>
<proteinExistence type="inferred from homology"/>
<feature type="propeptide" id="PRO_0000024489">
    <location>
        <begin position="1"/>
        <end position="21" status="greater than"/>
    </location>
</feature>
<feature type="region of interest" description="Disordered" evidence="2">
    <location>
        <begin position="1"/>
        <end position="21"/>
    </location>
</feature>
<feature type="non-terminal residue">
    <location>
        <position position="21"/>
    </location>
</feature>
<geneLocation type="plasmid">
    <name>ColB4-K98</name>
</geneLocation>